<reference key="1">
    <citation type="journal article" date="2006" name="J. Bacteriol.">
        <title>The genome of the obligately intracellular bacterium Ehrlichia canis reveals themes of complex membrane structure and immune evasion strategies.</title>
        <authorList>
            <person name="Mavromatis K."/>
            <person name="Doyle C.K."/>
            <person name="Lykidis A."/>
            <person name="Ivanova N."/>
            <person name="Francino M.P."/>
            <person name="Chain P."/>
            <person name="Shin M."/>
            <person name="Malfatti S."/>
            <person name="Larimer F."/>
            <person name="Copeland A."/>
            <person name="Detter J.C."/>
            <person name="Land M."/>
            <person name="Richardson P.M."/>
            <person name="Yu X.J."/>
            <person name="Walker D.H."/>
            <person name="McBride J.W."/>
            <person name="Kyrpides N.C."/>
        </authorList>
    </citation>
    <scope>NUCLEOTIDE SEQUENCE [LARGE SCALE GENOMIC DNA]</scope>
    <source>
        <strain>Jake</strain>
    </source>
</reference>
<name>FENR_EHRCJ</name>
<dbReference type="EC" id="1.18.1.2" evidence="1"/>
<dbReference type="EMBL" id="CP000107">
    <property type="protein sequence ID" value="AAZ68434.1"/>
    <property type="molecule type" value="Genomic_DNA"/>
</dbReference>
<dbReference type="RefSeq" id="WP_011304512.1">
    <property type="nucleotide sequence ID" value="NC_007354.1"/>
</dbReference>
<dbReference type="SMR" id="Q3YS71"/>
<dbReference type="STRING" id="269484.Ecaj_0391"/>
<dbReference type="KEGG" id="ecn:Ecaj_0391"/>
<dbReference type="eggNOG" id="COG0492">
    <property type="taxonomic scope" value="Bacteria"/>
</dbReference>
<dbReference type="HOGENOM" id="CLU_031864_5_5_5"/>
<dbReference type="InParanoid" id="Q3YS71"/>
<dbReference type="Proteomes" id="UP000000435">
    <property type="component" value="Chromosome"/>
</dbReference>
<dbReference type="GO" id="GO:0004324">
    <property type="term" value="F:ferredoxin-NADP+ reductase activity"/>
    <property type="evidence" value="ECO:0007669"/>
    <property type="project" value="UniProtKB-UniRule"/>
</dbReference>
<dbReference type="GO" id="GO:0050660">
    <property type="term" value="F:flavin adenine dinucleotide binding"/>
    <property type="evidence" value="ECO:0007669"/>
    <property type="project" value="UniProtKB-UniRule"/>
</dbReference>
<dbReference type="GO" id="GO:0050661">
    <property type="term" value="F:NADP binding"/>
    <property type="evidence" value="ECO:0007669"/>
    <property type="project" value="UniProtKB-UniRule"/>
</dbReference>
<dbReference type="Gene3D" id="3.50.50.60">
    <property type="entry name" value="FAD/NAD(P)-binding domain"/>
    <property type="match status" value="2"/>
</dbReference>
<dbReference type="HAMAP" id="MF_01685">
    <property type="entry name" value="FENR2"/>
    <property type="match status" value="1"/>
</dbReference>
<dbReference type="InterPro" id="IPR036188">
    <property type="entry name" value="FAD/NAD-bd_sf"/>
</dbReference>
<dbReference type="InterPro" id="IPR023753">
    <property type="entry name" value="FAD/NAD-binding_dom"/>
</dbReference>
<dbReference type="InterPro" id="IPR022890">
    <property type="entry name" value="Fd--NADP_Rdtase_type_2"/>
</dbReference>
<dbReference type="InterPro" id="IPR050097">
    <property type="entry name" value="Ferredoxin-NADP_redctase_2"/>
</dbReference>
<dbReference type="PANTHER" id="PTHR48105">
    <property type="entry name" value="THIOREDOXIN REDUCTASE 1-RELATED-RELATED"/>
    <property type="match status" value="1"/>
</dbReference>
<dbReference type="Pfam" id="PF07992">
    <property type="entry name" value="Pyr_redox_2"/>
    <property type="match status" value="1"/>
</dbReference>
<dbReference type="PRINTS" id="PR00368">
    <property type="entry name" value="FADPNR"/>
</dbReference>
<dbReference type="PRINTS" id="PR00469">
    <property type="entry name" value="PNDRDTASEII"/>
</dbReference>
<dbReference type="SUPFAM" id="SSF51905">
    <property type="entry name" value="FAD/NAD(P)-binding domain"/>
    <property type="match status" value="1"/>
</dbReference>
<comment type="catalytic activity">
    <reaction evidence="1">
        <text>2 reduced [2Fe-2S]-[ferredoxin] + NADP(+) + H(+) = 2 oxidized [2Fe-2S]-[ferredoxin] + NADPH</text>
        <dbReference type="Rhea" id="RHEA:20125"/>
        <dbReference type="Rhea" id="RHEA-COMP:10000"/>
        <dbReference type="Rhea" id="RHEA-COMP:10001"/>
        <dbReference type="ChEBI" id="CHEBI:15378"/>
        <dbReference type="ChEBI" id="CHEBI:33737"/>
        <dbReference type="ChEBI" id="CHEBI:33738"/>
        <dbReference type="ChEBI" id="CHEBI:57783"/>
        <dbReference type="ChEBI" id="CHEBI:58349"/>
        <dbReference type="EC" id="1.18.1.2"/>
    </reaction>
</comment>
<comment type="cofactor">
    <cofactor evidence="1">
        <name>FAD</name>
        <dbReference type="ChEBI" id="CHEBI:57692"/>
    </cofactor>
    <text evidence="1">Binds 1 FAD per subunit.</text>
</comment>
<comment type="subunit">
    <text evidence="1">Homodimer.</text>
</comment>
<comment type="similarity">
    <text evidence="1">Belongs to the ferredoxin--NADP reductase type 2 family.</text>
</comment>
<evidence type="ECO:0000255" key="1">
    <source>
        <dbReference type="HAMAP-Rule" id="MF_01685"/>
    </source>
</evidence>
<protein>
    <recommendedName>
        <fullName evidence="1">Ferredoxin--NADP reductase</fullName>
        <shortName evidence="1">FNR</shortName>
        <shortName evidence="1">Fd-NADP(+) reductase</shortName>
        <ecNumber evidence="1">1.18.1.2</ecNumber>
    </recommendedName>
</protein>
<proteinExistence type="inferred from homology"/>
<sequence length="338" mass="37478">MTDYTTDIAVIGAGPVGIFTVFQAGMLKMQCCVIDALTEVGGQCTALYPEKPIYDIPGYPIVSGKELIDNLKKQSEPFNPQYLLGQIAEKIEDYSDYFLIRTSKGIVIQSKVIVIAAGAGAFGPNRPPIDNILDYENKSVFYQVKNISDFHNKNIMIAGGGDSAADWAVELSKIASQLYIVHRRRNFRCAPNTALQIDNLSQNGKINVIVPYQIKKLLGEEGKLHSVVVQNITNHEEITLQVDYLFPFFGTSANLGSMLNWGIEIKGYQMTVDFETCRTSRDRIYAVGDIATYPGKVKLILTGFSEAAMACHHIYHIVYPNSPLNFQYSTSKGIPNKN</sequence>
<accession>Q3YS71</accession>
<gene>
    <name type="ordered locus">Ecaj_0391</name>
</gene>
<feature type="chain" id="PRO_0000364829" description="Ferredoxin--NADP reductase">
    <location>
        <begin position="1"/>
        <end position="338"/>
    </location>
</feature>
<feature type="binding site" evidence="1">
    <location>
        <position position="35"/>
    </location>
    <ligand>
        <name>FAD</name>
        <dbReference type="ChEBI" id="CHEBI:57692"/>
    </ligand>
</feature>
<feature type="binding site" evidence="1">
    <location>
        <position position="43"/>
    </location>
    <ligand>
        <name>FAD</name>
        <dbReference type="ChEBI" id="CHEBI:57692"/>
    </ligand>
</feature>
<feature type="binding site" evidence="1">
    <location>
        <position position="48"/>
    </location>
    <ligand>
        <name>FAD</name>
        <dbReference type="ChEBI" id="CHEBI:57692"/>
    </ligand>
</feature>
<feature type="binding site" evidence="1">
    <location>
        <position position="88"/>
    </location>
    <ligand>
        <name>FAD</name>
        <dbReference type="ChEBI" id="CHEBI:57692"/>
    </ligand>
</feature>
<feature type="binding site" evidence="1">
    <location>
        <position position="122"/>
    </location>
    <ligand>
        <name>FAD</name>
        <dbReference type="ChEBI" id="CHEBI:57692"/>
    </ligand>
</feature>
<feature type="binding site" evidence="1">
    <location>
        <position position="289"/>
    </location>
    <ligand>
        <name>FAD</name>
        <dbReference type="ChEBI" id="CHEBI:57692"/>
    </ligand>
</feature>
<feature type="binding site" evidence="1">
    <location>
        <position position="330"/>
    </location>
    <ligand>
        <name>FAD</name>
        <dbReference type="ChEBI" id="CHEBI:57692"/>
    </ligand>
</feature>
<organism>
    <name type="scientific">Ehrlichia canis (strain Jake)</name>
    <dbReference type="NCBI Taxonomy" id="269484"/>
    <lineage>
        <taxon>Bacteria</taxon>
        <taxon>Pseudomonadati</taxon>
        <taxon>Pseudomonadota</taxon>
        <taxon>Alphaproteobacteria</taxon>
        <taxon>Rickettsiales</taxon>
        <taxon>Anaplasmataceae</taxon>
        <taxon>Ehrlichia</taxon>
    </lineage>
</organism>
<keyword id="KW-0274">FAD</keyword>
<keyword id="KW-0285">Flavoprotein</keyword>
<keyword id="KW-0521">NADP</keyword>
<keyword id="KW-0560">Oxidoreductase</keyword>